<evidence type="ECO:0000255" key="1"/>
<evidence type="ECO:0000269" key="2">
    <source>
    </source>
</evidence>
<evidence type="ECO:0000303" key="3">
    <source>
    </source>
</evidence>
<evidence type="ECO:0000303" key="4">
    <source>
    </source>
</evidence>
<evidence type="ECO:0000305" key="5"/>
<accession>P04698</accession>
<accession>B6UGK9</accession>
<accession>B6UH84</accession>
<reference key="1">
    <citation type="journal article" date="1982" name="J. Biol. Chem.">
        <title>Analysis of sequence microheterogeneity among zein messenger RNAs.</title>
        <authorList>
            <person name="Marks M.D."/>
            <person name="Larkins B.A."/>
        </authorList>
    </citation>
    <scope>NUCLEOTIDE SEQUENCE [MRNA]</scope>
    <source>
        <strain>cv. Wisconsin 64A</strain>
    </source>
</reference>
<reference key="2">
    <citation type="journal article" date="2009" name="Plant Mol. Biol.">
        <title>Insights into corn genes derived from large-scale cDNA sequencing.</title>
        <authorList>
            <person name="Alexandrov N.N."/>
            <person name="Brover V.V."/>
            <person name="Freidin S."/>
            <person name="Troukhan M.E."/>
            <person name="Tatarinova T.V."/>
            <person name="Zhang H."/>
            <person name="Swaller T.J."/>
            <person name="Lu Y.-P."/>
            <person name="Bouck J."/>
            <person name="Flavell R.B."/>
            <person name="Feldmann K.A."/>
        </authorList>
    </citation>
    <scope>NUCLEOTIDE SEQUENCE [LARGE SCALE MRNA]</scope>
</reference>
<reference key="3">
    <citation type="journal article" date="1982" name="J. Biol. Chem.">
        <title>A structural model for maize zein proteins.</title>
        <authorList>
            <person name="Argos P."/>
            <person name="Pedersen K."/>
            <person name="Marks M.D."/>
            <person name="Larkins B.A."/>
        </authorList>
    </citation>
    <scope>3D-STRUCTURE MODELING</scope>
</reference>
<reference key="4">
    <citation type="journal article" date="2001" name="Genome Res.">
        <title>Sequence, regulation, and evolution of the maize 22-kD alpha zein gene family.</title>
        <authorList>
            <person name="Song R."/>
            <person name="Llaca V."/>
            <person name="Linton E."/>
            <person name="Messing J."/>
        </authorList>
    </citation>
    <scope>GENE FAMILY</scope>
    <scope>NOMENCLATURE</scope>
</reference>
<proteinExistence type="evidence at transcript level"/>
<sequence length="267" mass="29063">MATKILSLLALLALFASATNASIIPQCSLAPSSIIPQFLPPVTSMAFEHPAVQAYRLQQAIAASVLQQPIAQLQQQSLAHLTIQTIATQQQQQQFLPALSHLAMVNPVAYLQQQLLASNPLALANVVANQQQQQLQQFLPALSQLAMVNPAAYLQQQQLLSSSPLAVANAPTYLQQELLQQIVPALTQLAVANPVAYLQQLLPFNQLTMSNSVAYLQQRQQLLNPLAVANPLVAAFLQQQQLLPYNRFSLMNPVLSRQQPIVGGAIF</sequence>
<protein>
    <recommendedName>
        <fullName evidence="3">22 kDa alpha-zein 14</fullName>
    </recommendedName>
    <alternativeName>
        <fullName evidence="4">22 kDa zein PZ22.3</fullName>
    </alternativeName>
    <alternativeName>
        <fullName evidence="4">Zein-alpha PZ22.3</fullName>
    </alternativeName>
</protein>
<feature type="signal peptide" evidence="1">
    <location>
        <begin position="1"/>
        <end position="21"/>
    </location>
</feature>
<feature type="chain" id="PRO_0000041628" description="22 kDa alpha-zein 14" evidence="1">
    <location>
        <begin position="22"/>
        <end position="267"/>
    </location>
</feature>
<feature type="sequence conflict" description="In Ref. 2; ACG48717/ACG48492." evidence="5" ref="2">
    <location>
        <position position="89"/>
    </location>
</feature>
<feature type="sequence conflict" description="In Ref. 1; AAA33533." evidence="5" ref="1">
    <location>
        <position position="94"/>
    </location>
</feature>
<organism>
    <name type="scientific">Zea mays</name>
    <name type="common">Maize</name>
    <dbReference type="NCBI Taxonomy" id="4577"/>
    <lineage>
        <taxon>Eukaryota</taxon>
        <taxon>Viridiplantae</taxon>
        <taxon>Streptophyta</taxon>
        <taxon>Embryophyta</taxon>
        <taxon>Tracheophyta</taxon>
        <taxon>Spermatophyta</taxon>
        <taxon>Magnoliopsida</taxon>
        <taxon>Liliopsida</taxon>
        <taxon>Poales</taxon>
        <taxon>Poaceae</taxon>
        <taxon>PACMAD clade</taxon>
        <taxon>Panicoideae</taxon>
        <taxon>Andropogonodae</taxon>
        <taxon>Andropogoneae</taxon>
        <taxon>Tripsacinae</taxon>
        <taxon>Zea</taxon>
    </lineage>
</organism>
<dbReference type="EMBL" id="V01480">
    <property type="protein sequence ID" value="CAA24727.1"/>
    <property type="molecule type" value="mRNA"/>
</dbReference>
<dbReference type="EMBL" id="J01246">
    <property type="protein sequence ID" value="AAA33533.1"/>
    <property type="molecule type" value="mRNA"/>
</dbReference>
<dbReference type="EMBL" id="EU976599">
    <property type="protein sequence ID" value="ACG48717.1"/>
    <property type="molecule type" value="mRNA"/>
</dbReference>
<dbReference type="EMBL" id="EU976374">
    <property type="protein sequence ID" value="ACG48492.1"/>
    <property type="molecule type" value="mRNA"/>
</dbReference>
<dbReference type="PIR" id="B26564">
    <property type="entry name" value="ZIZM23"/>
</dbReference>
<dbReference type="RefSeq" id="NP_001105953.1">
    <property type="nucleotide sequence ID" value="NM_001112483.1"/>
</dbReference>
<dbReference type="RefSeq" id="NP_001105999.1">
    <property type="nucleotide sequence ID" value="NM_001112529.1"/>
</dbReference>
<dbReference type="RefSeq" id="NP_001161839.1">
    <property type="nucleotide sequence ID" value="NM_001168367.1"/>
</dbReference>
<dbReference type="STRING" id="4577.P04698"/>
<dbReference type="MaizeGDB" id="58096"/>
<dbReference type="InParanoid" id="P04698"/>
<dbReference type="Proteomes" id="UP000007305">
    <property type="component" value="Unplaced"/>
</dbReference>
<dbReference type="ExpressionAtlas" id="P04698">
    <property type="expression patterns" value="baseline and differential"/>
</dbReference>
<dbReference type="GO" id="GO:0045735">
    <property type="term" value="F:nutrient reservoir activity"/>
    <property type="evidence" value="ECO:0007669"/>
    <property type="project" value="UniProtKB-KW"/>
</dbReference>
<dbReference type="InterPro" id="IPR052508">
    <property type="entry name" value="Maize_Zein_Storage"/>
</dbReference>
<dbReference type="InterPro" id="IPR002530">
    <property type="entry name" value="Zein"/>
</dbReference>
<dbReference type="PANTHER" id="PTHR48244:SF3">
    <property type="entry name" value="22 KDA ALPHA-ZEIN 8"/>
    <property type="match status" value="1"/>
</dbReference>
<dbReference type="PANTHER" id="PTHR48244">
    <property type="entry name" value="ZEIN-ALPHA A20-RELATED"/>
    <property type="match status" value="1"/>
</dbReference>
<dbReference type="Pfam" id="PF01559">
    <property type="entry name" value="Zein"/>
    <property type="match status" value="1"/>
</dbReference>
<name>ZEAZW_MAIZE</name>
<keyword id="KW-1185">Reference proteome</keyword>
<keyword id="KW-0708">Seed storage protein</keyword>
<keyword id="KW-0732">Signal</keyword>
<keyword id="KW-0758">Storage protein</keyword>
<gene>
    <name evidence="3" type="primary">AZS22-14</name>
</gene>
<comment type="function">
    <text evidence="5">Zeins are major seed storage proteins.</text>
</comment>
<comment type="miscellaneous">
    <text>The alpha zeins of 19 kDa and 22 kDa account for 70% of the total zein fraction. They are encoded by a large multigene family.</text>
</comment>
<comment type="miscellaneous">
    <text evidence="2">Structurally, 22K and 19K zeins are composed of nine adjacent, topologically antiparallel helices clustered within a distorted cylinder.</text>
</comment>
<comment type="similarity">
    <text evidence="5">Belongs to the zein family.</text>
</comment>